<keyword id="KW-0963">Cytoplasm</keyword>
<keyword id="KW-0507">mRNA processing</keyword>
<keyword id="KW-0508">mRNA splicing</keyword>
<keyword id="KW-0509">mRNA transport</keyword>
<keyword id="KW-0866">Nonsense-mediated mRNA decay</keyword>
<keyword id="KW-0539">Nucleus</keyword>
<keyword id="KW-1185">Reference proteome</keyword>
<keyword id="KW-0694">RNA-binding</keyword>
<keyword id="KW-0810">Translation regulation</keyword>
<keyword id="KW-0813">Transport</keyword>
<sequence length="147" mass="17223">MSTSDFYLRYYVGHKGKFGHEFLEFEFRPDGKLRYANNSNYKNDVMIRKEAYVHKSVMEELKRIIDDSEITKEDDALWPPPDRVGRQELEIVIGDEHISFTTSKIGSLIDVNQSKDPEGLRVFYYLVQDLKCLVFSLIGLHFKIKPI</sequence>
<proteinExistence type="evidence at transcript level"/>
<gene>
    <name type="primary">magoh</name>
</gene>
<dbReference type="EMBL" id="BT057172">
    <property type="protein sequence ID" value="ACM09044.1"/>
    <property type="molecule type" value="mRNA"/>
</dbReference>
<dbReference type="SMR" id="B9ENE7"/>
<dbReference type="STRING" id="8030.ENSSSAP00000019831"/>
<dbReference type="PaxDb" id="8030-ENSSSAP00000019831"/>
<dbReference type="Ensembl" id="ENSSSAT00020063382">
    <property type="protein sequence ID" value="ENSSSAP00020048932"/>
    <property type="gene ID" value="ENSSSAG00020027969"/>
</dbReference>
<dbReference type="Ensembl" id="ENSSSAT00070006927">
    <property type="protein sequence ID" value="ENSSSAP00070006468"/>
    <property type="gene ID" value="ENSSSAG00070004629"/>
</dbReference>
<dbReference type="Ensembl" id="ENSSSAT00075073433">
    <property type="protein sequence ID" value="ENSSSAP00075052390"/>
    <property type="gene ID" value="ENSSSAG00075035169"/>
</dbReference>
<dbReference type="GeneID" id="106584057"/>
<dbReference type="KEGG" id="sasa:106584057"/>
<dbReference type="OrthoDB" id="86166at7898"/>
<dbReference type="Proteomes" id="UP000087266">
    <property type="component" value="Chromosome ssa23"/>
</dbReference>
<dbReference type="Bgee" id="ENSSSAG00000009680">
    <property type="expression patterns" value="Expressed in semen and 24 other cell types or tissues"/>
</dbReference>
<dbReference type="GO" id="GO:0071013">
    <property type="term" value="C:catalytic step 2 spliceosome"/>
    <property type="evidence" value="ECO:0007669"/>
    <property type="project" value="TreeGrafter"/>
</dbReference>
<dbReference type="GO" id="GO:0005737">
    <property type="term" value="C:cytoplasm"/>
    <property type="evidence" value="ECO:0007669"/>
    <property type="project" value="UniProtKB-SubCell"/>
</dbReference>
<dbReference type="GO" id="GO:0035145">
    <property type="term" value="C:exon-exon junction complex"/>
    <property type="evidence" value="ECO:0007669"/>
    <property type="project" value="InterPro"/>
</dbReference>
<dbReference type="GO" id="GO:0016607">
    <property type="term" value="C:nuclear speck"/>
    <property type="evidence" value="ECO:0007669"/>
    <property type="project" value="UniProtKB-SubCell"/>
</dbReference>
<dbReference type="GO" id="GO:0003723">
    <property type="term" value="F:RNA binding"/>
    <property type="evidence" value="ECO:0007669"/>
    <property type="project" value="UniProtKB-KW"/>
</dbReference>
<dbReference type="GO" id="GO:0006397">
    <property type="term" value="P:mRNA processing"/>
    <property type="evidence" value="ECO:0007669"/>
    <property type="project" value="UniProtKB-KW"/>
</dbReference>
<dbReference type="GO" id="GO:0051028">
    <property type="term" value="P:mRNA transport"/>
    <property type="evidence" value="ECO:0007669"/>
    <property type="project" value="UniProtKB-KW"/>
</dbReference>
<dbReference type="GO" id="GO:0000184">
    <property type="term" value="P:nuclear-transcribed mRNA catabolic process, nonsense-mediated decay"/>
    <property type="evidence" value="ECO:0007669"/>
    <property type="project" value="UniProtKB-KW"/>
</dbReference>
<dbReference type="GO" id="GO:0000381">
    <property type="term" value="P:regulation of alternative mRNA splicing, via spliceosome"/>
    <property type="evidence" value="ECO:0000250"/>
    <property type="project" value="UniProtKB"/>
</dbReference>
<dbReference type="GO" id="GO:0006417">
    <property type="term" value="P:regulation of translation"/>
    <property type="evidence" value="ECO:0007669"/>
    <property type="project" value="UniProtKB-KW"/>
</dbReference>
<dbReference type="GO" id="GO:0008380">
    <property type="term" value="P:RNA splicing"/>
    <property type="evidence" value="ECO:0007669"/>
    <property type="project" value="UniProtKB-KW"/>
</dbReference>
<dbReference type="CDD" id="cd11295">
    <property type="entry name" value="Mago_nashi"/>
    <property type="match status" value="1"/>
</dbReference>
<dbReference type="FunFam" id="3.30.1560.10:FF:000001">
    <property type="entry name" value="Protein mago nashi homolog"/>
    <property type="match status" value="1"/>
</dbReference>
<dbReference type="Gene3D" id="3.30.1560.10">
    <property type="entry name" value="Mago nashi"/>
    <property type="match status" value="1"/>
</dbReference>
<dbReference type="InterPro" id="IPR004023">
    <property type="entry name" value="Mago_nashi"/>
</dbReference>
<dbReference type="InterPro" id="IPR036605">
    <property type="entry name" value="Mago_nashi_sf"/>
</dbReference>
<dbReference type="PANTHER" id="PTHR12638:SF0">
    <property type="entry name" value="MAGO HOMOLOG, EXON JUNCTION COMPLEX SUBUNIT-RELATED"/>
    <property type="match status" value="1"/>
</dbReference>
<dbReference type="PANTHER" id="PTHR12638">
    <property type="entry name" value="PROTEIN MAGO NASHI HOMOLOG"/>
    <property type="match status" value="1"/>
</dbReference>
<dbReference type="Pfam" id="PF02792">
    <property type="entry name" value="Mago_nashi"/>
    <property type="match status" value="1"/>
</dbReference>
<dbReference type="SUPFAM" id="SSF89817">
    <property type="entry name" value="Mago nashi protein"/>
    <property type="match status" value="1"/>
</dbReference>
<accession>B9ENE7</accession>
<name>MGN_SALSA</name>
<feature type="chain" id="PRO_0000378585" description="Protein mago nashi homolog">
    <location>
        <begin position="1"/>
        <end position="147"/>
    </location>
</feature>
<organism>
    <name type="scientific">Salmo salar</name>
    <name type="common">Atlantic salmon</name>
    <dbReference type="NCBI Taxonomy" id="8030"/>
    <lineage>
        <taxon>Eukaryota</taxon>
        <taxon>Metazoa</taxon>
        <taxon>Chordata</taxon>
        <taxon>Craniata</taxon>
        <taxon>Vertebrata</taxon>
        <taxon>Euteleostomi</taxon>
        <taxon>Actinopterygii</taxon>
        <taxon>Neopterygii</taxon>
        <taxon>Teleostei</taxon>
        <taxon>Protacanthopterygii</taxon>
        <taxon>Salmoniformes</taxon>
        <taxon>Salmonidae</taxon>
        <taxon>Salmoninae</taxon>
        <taxon>Salmo</taxon>
    </lineage>
</organism>
<reference key="1">
    <citation type="journal article" date="2010" name="BMC Genomics">
        <title>Salmo salar and Esox lucius full-length cDNA sequences reveal changes in evolutionary pressures on a post-tetraploidization genome.</title>
        <authorList>
            <person name="Leong J.S."/>
            <person name="Jantzen S.G."/>
            <person name="von Schalburg K.R."/>
            <person name="Cooper G.A."/>
            <person name="Messmer A.M."/>
            <person name="Liao N.Y."/>
            <person name="Munro S."/>
            <person name="Moore R."/>
            <person name="Holt R.A."/>
            <person name="Jones S.J."/>
            <person name="Davidson W.S."/>
            <person name="Koop B.F."/>
        </authorList>
    </citation>
    <scope>NUCLEOTIDE SEQUENCE [LARGE SCALE MRNA]</scope>
    <source>
        <tissue>Spleen</tissue>
    </source>
</reference>
<protein>
    <recommendedName>
        <fullName>Protein mago nashi homolog</fullName>
    </recommendedName>
</protein>
<evidence type="ECO:0000250" key="1">
    <source>
        <dbReference type="UniProtKB" id="P61326"/>
    </source>
</evidence>
<evidence type="ECO:0000305" key="2"/>
<comment type="function">
    <text evidence="1">Core component of the splicing-dependent multiprotein exon junction complex (EJC) deposited at splice junctions on mRNAs. The EJC is a dynamic structure consisting of core proteins and several peripheral nuclear and cytoplasmic associated factors that join the complex only transiently either during EJC assembly or during subsequent mRNA metabolism. The EJC marks the position of the exon-exon junction in the mature mRNA for the gene expression machinery and the core components remain bound to spliced mRNAs throughout all stages of mRNA metabolism thereby influencing downstream processes including nuclear mRNA export, subcellular mRNA localization, translation efficiency and nonsense-mediated mRNA decay (NMD) (By similarity).</text>
</comment>
<comment type="subunit">
    <text evidence="1">Part of the EJC core complex that contains casc3, eif4a3, magoh and rbm8a.</text>
</comment>
<comment type="subcellular location">
    <subcellularLocation>
        <location evidence="1">Nucleus</location>
    </subcellularLocation>
    <subcellularLocation>
        <location evidence="1">Nucleus speckle</location>
    </subcellularLocation>
    <subcellularLocation>
        <location evidence="1">Cytoplasm</location>
    </subcellularLocation>
    <text evidence="1">Travels to the cytoplasm as part of the exon junction complex (EJC) bound to mRNA.</text>
</comment>
<comment type="similarity">
    <text evidence="2">Belongs to the mago nashi family.</text>
</comment>